<dbReference type="EMBL" id="AK012093">
    <property type="protein sequence ID" value="BAB28025.1"/>
    <property type="molecule type" value="mRNA"/>
</dbReference>
<dbReference type="EMBL" id="CH466533">
    <property type="protein sequence ID" value="EDL13868.1"/>
    <property type="molecule type" value="Genomic_DNA"/>
</dbReference>
<dbReference type="EMBL" id="BC026373">
    <property type="protein sequence ID" value="AAH26373.1"/>
    <property type="molecule type" value="mRNA"/>
</dbReference>
<dbReference type="CCDS" id="CCDS19928.1"/>
<dbReference type="PIR" id="B36470">
    <property type="entry name" value="B36470"/>
</dbReference>
<dbReference type="RefSeq" id="NP_076142.3">
    <property type="nucleotide sequence ID" value="NM_023653.5"/>
</dbReference>
<dbReference type="SMR" id="P21552"/>
<dbReference type="BioGRID" id="204572">
    <property type="interactions" value="2"/>
</dbReference>
<dbReference type="FunCoup" id="P21552">
    <property type="interactions" value="436"/>
</dbReference>
<dbReference type="STRING" id="10090.ENSMUSP00000010941"/>
<dbReference type="BindingDB" id="P21552"/>
<dbReference type="GlyCosmos" id="P21552">
    <property type="glycosylation" value="1 site, No reported glycans"/>
</dbReference>
<dbReference type="GlyGen" id="P21552">
    <property type="glycosylation" value="1 site"/>
</dbReference>
<dbReference type="iPTMnet" id="P21552"/>
<dbReference type="PhosphoSitePlus" id="P21552"/>
<dbReference type="PaxDb" id="10090-ENSMUSP00000010941"/>
<dbReference type="ProteomicsDB" id="299995"/>
<dbReference type="Antibodypedia" id="4474">
    <property type="antibodies" value="277 antibodies from 34 providers"/>
</dbReference>
<dbReference type="DNASU" id="22413"/>
<dbReference type="Ensembl" id="ENSMUST00000010941.6">
    <property type="protein sequence ID" value="ENSMUSP00000010941.3"/>
    <property type="gene ID" value="ENSMUSG00000010797.7"/>
</dbReference>
<dbReference type="GeneID" id="22413"/>
<dbReference type="KEGG" id="mmu:22413"/>
<dbReference type="UCSC" id="uc009bag.2">
    <property type="organism name" value="mouse"/>
</dbReference>
<dbReference type="AGR" id="MGI:98954"/>
<dbReference type="CTD" id="7472"/>
<dbReference type="MGI" id="MGI:98954">
    <property type="gene designation" value="Wnt2"/>
</dbReference>
<dbReference type="VEuPathDB" id="HostDB:ENSMUSG00000010797"/>
<dbReference type="eggNOG" id="KOG3913">
    <property type="taxonomic scope" value="Eukaryota"/>
</dbReference>
<dbReference type="GeneTree" id="ENSGT00940000159231"/>
<dbReference type="HOGENOM" id="CLU_033039_1_4_1"/>
<dbReference type="InParanoid" id="P21552"/>
<dbReference type="OMA" id="ITRMTKC"/>
<dbReference type="OrthoDB" id="5945655at2759"/>
<dbReference type="PhylomeDB" id="P21552"/>
<dbReference type="TreeFam" id="TF105310"/>
<dbReference type="Reactome" id="R-MMU-3238698">
    <property type="pathway name" value="WNT ligand biogenesis and trafficking"/>
</dbReference>
<dbReference type="BioGRID-ORCS" id="22413">
    <property type="hits" value="4 hits in 77 CRISPR screens"/>
</dbReference>
<dbReference type="PRO" id="PR:P21552"/>
<dbReference type="Proteomes" id="UP000000589">
    <property type="component" value="Chromosome 6"/>
</dbReference>
<dbReference type="RNAct" id="P21552">
    <property type="molecule type" value="protein"/>
</dbReference>
<dbReference type="Bgee" id="ENSMUSG00000010797">
    <property type="expression patterns" value="Expressed in prostatic urethra and 114 other cell types or tissues"/>
</dbReference>
<dbReference type="GO" id="GO:0005737">
    <property type="term" value="C:cytoplasm"/>
    <property type="evidence" value="ECO:0000266"/>
    <property type="project" value="MGI"/>
</dbReference>
<dbReference type="GO" id="GO:0005576">
    <property type="term" value="C:extracellular region"/>
    <property type="evidence" value="ECO:0007669"/>
    <property type="project" value="UniProtKB-SubCell"/>
</dbReference>
<dbReference type="GO" id="GO:0005125">
    <property type="term" value="F:cytokine activity"/>
    <property type="evidence" value="ECO:0007669"/>
    <property type="project" value="Ensembl"/>
</dbReference>
<dbReference type="GO" id="GO:0005109">
    <property type="term" value="F:frizzled binding"/>
    <property type="evidence" value="ECO:0007669"/>
    <property type="project" value="Ensembl"/>
</dbReference>
<dbReference type="GO" id="GO:0055009">
    <property type="term" value="P:atrial cardiac muscle tissue morphogenesis"/>
    <property type="evidence" value="ECO:0000315"/>
    <property type="project" value="MGI"/>
</dbReference>
<dbReference type="GO" id="GO:0060070">
    <property type="term" value="P:canonical Wnt signaling pathway"/>
    <property type="evidence" value="ECO:0000314"/>
    <property type="project" value="MGI"/>
</dbReference>
<dbReference type="GO" id="GO:0060317">
    <property type="term" value="P:cardiac epithelial to mesenchymal transition"/>
    <property type="evidence" value="ECO:0000315"/>
    <property type="project" value="MGI"/>
</dbReference>
<dbReference type="GO" id="GO:0060038">
    <property type="term" value="P:cardiac muscle cell proliferation"/>
    <property type="evidence" value="ECO:0000315"/>
    <property type="project" value="MGI"/>
</dbReference>
<dbReference type="GO" id="GO:0033278">
    <property type="term" value="P:cell proliferation in midbrain"/>
    <property type="evidence" value="ECO:0000315"/>
    <property type="project" value="CACAO"/>
</dbReference>
<dbReference type="GO" id="GO:0007267">
    <property type="term" value="P:cell-cell signaling"/>
    <property type="evidence" value="ECO:0007669"/>
    <property type="project" value="Ensembl"/>
</dbReference>
<dbReference type="GO" id="GO:0071560">
    <property type="term" value="P:cellular response to transforming growth factor beta stimulus"/>
    <property type="evidence" value="ECO:0007669"/>
    <property type="project" value="Ensembl"/>
</dbReference>
<dbReference type="GO" id="GO:0050673">
    <property type="term" value="P:epithelial cell proliferation"/>
    <property type="evidence" value="ECO:0000315"/>
    <property type="project" value="MGI"/>
</dbReference>
<dbReference type="GO" id="GO:0060502">
    <property type="term" value="P:epithelial cell proliferation involved in lung morphogenesis"/>
    <property type="evidence" value="ECO:0000315"/>
    <property type="project" value="MGI"/>
</dbReference>
<dbReference type="GO" id="GO:0060716">
    <property type="term" value="P:labyrinthine layer blood vessel development"/>
    <property type="evidence" value="ECO:0000315"/>
    <property type="project" value="MGI"/>
</dbReference>
<dbReference type="GO" id="GO:0060492">
    <property type="term" value="P:lung induction"/>
    <property type="evidence" value="ECO:0000316"/>
    <property type="project" value="MGI"/>
</dbReference>
<dbReference type="GO" id="GO:0061180">
    <property type="term" value="P:mammary gland epithelium development"/>
    <property type="evidence" value="ECO:0007669"/>
    <property type="project" value="Ensembl"/>
</dbReference>
<dbReference type="GO" id="GO:0010463">
    <property type="term" value="P:mesenchymal cell proliferation"/>
    <property type="evidence" value="ECO:0000315"/>
    <property type="project" value="MGI"/>
</dbReference>
<dbReference type="GO" id="GO:1904948">
    <property type="term" value="P:midbrain dopaminergic neuron differentiation"/>
    <property type="evidence" value="ECO:0007669"/>
    <property type="project" value="Ensembl"/>
</dbReference>
<dbReference type="GO" id="GO:0060045">
    <property type="term" value="P:positive regulation of cardiac muscle cell proliferation"/>
    <property type="evidence" value="ECO:0000315"/>
    <property type="project" value="MGI"/>
</dbReference>
<dbReference type="GO" id="GO:0050679">
    <property type="term" value="P:positive regulation of epithelial cell proliferation"/>
    <property type="evidence" value="ECO:0000315"/>
    <property type="project" value="MGI"/>
</dbReference>
<dbReference type="GO" id="GO:0060501">
    <property type="term" value="P:positive regulation of epithelial cell proliferation involved in lung morphogenesis"/>
    <property type="evidence" value="ECO:0000315"/>
    <property type="project" value="MGI"/>
</dbReference>
<dbReference type="GO" id="GO:0048146">
    <property type="term" value="P:positive regulation of fibroblast proliferation"/>
    <property type="evidence" value="ECO:0007669"/>
    <property type="project" value="Ensembl"/>
</dbReference>
<dbReference type="GO" id="GO:0002053">
    <property type="term" value="P:positive regulation of mesenchymal cell proliferation"/>
    <property type="evidence" value="ECO:0000315"/>
    <property type="project" value="MGI"/>
</dbReference>
<dbReference type="GO" id="GO:0050769">
    <property type="term" value="P:positive regulation of neurogenesis"/>
    <property type="evidence" value="ECO:0000314"/>
    <property type="project" value="CACAO"/>
</dbReference>
<dbReference type="GO" id="GO:0045944">
    <property type="term" value="P:positive regulation of transcription by RNA polymerase II"/>
    <property type="evidence" value="ECO:0000314"/>
    <property type="project" value="MGI"/>
</dbReference>
<dbReference type="GO" id="GO:0016055">
    <property type="term" value="P:Wnt signaling pathway"/>
    <property type="evidence" value="ECO:0000316"/>
    <property type="project" value="MGI"/>
</dbReference>
<dbReference type="CDD" id="cd19345">
    <property type="entry name" value="Wnt_Wnt2"/>
    <property type="match status" value="1"/>
</dbReference>
<dbReference type="FunFam" id="3.30.2460.20:FF:000001">
    <property type="entry name" value="Wnt homolog"/>
    <property type="match status" value="1"/>
</dbReference>
<dbReference type="Gene3D" id="3.30.2460.20">
    <property type="match status" value="1"/>
</dbReference>
<dbReference type="InterPro" id="IPR005817">
    <property type="entry name" value="Wnt"/>
</dbReference>
<dbReference type="InterPro" id="IPR009140">
    <property type="entry name" value="Wnt2"/>
</dbReference>
<dbReference type="InterPro" id="IPR043158">
    <property type="entry name" value="Wnt_C"/>
</dbReference>
<dbReference type="InterPro" id="IPR018161">
    <property type="entry name" value="Wnt_CS"/>
</dbReference>
<dbReference type="PANTHER" id="PTHR12027:SF86">
    <property type="entry name" value="PROTEIN WNT-2"/>
    <property type="match status" value="1"/>
</dbReference>
<dbReference type="PANTHER" id="PTHR12027">
    <property type="entry name" value="WNT RELATED"/>
    <property type="match status" value="1"/>
</dbReference>
<dbReference type="Pfam" id="PF00110">
    <property type="entry name" value="wnt"/>
    <property type="match status" value="1"/>
</dbReference>
<dbReference type="PRINTS" id="PR01842">
    <property type="entry name" value="WNT2PROTEIN"/>
</dbReference>
<dbReference type="PRINTS" id="PR01349">
    <property type="entry name" value="WNTPROTEIN"/>
</dbReference>
<dbReference type="SMART" id="SM00097">
    <property type="entry name" value="WNT1"/>
    <property type="match status" value="1"/>
</dbReference>
<dbReference type="PROSITE" id="PS00246">
    <property type="entry name" value="WNT1"/>
    <property type="match status" value="1"/>
</dbReference>
<accession>P21552</accession>
<accession>Q9CZW3</accession>
<feature type="signal peptide" evidence="4">
    <location>
        <begin position="1"/>
        <end position="25"/>
    </location>
</feature>
<feature type="chain" id="PRO_0000041411" description="Protein Wnt-2">
    <location>
        <begin position="26"/>
        <end position="360"/>
    </location>
</feature>
<feature type="lipid moiety-binding region" description="O-palmitoleoyl serine; by PORCN" evidence="3">
    <location>
        <position position="212"/>
    </location>
</feature>
<feature type="glycosylation site" description="N-linked (GlcNAc...) asparagine" evidence="4">
    <location>
        <position position="295"/>
    </location>
</feature>
<feature type="disulfide bond" evidence="2">
    <location>
        <begin position="76"/>
        <end position="87"/>
    </location>
</feature>
<feature type="disulfide bond" evidence="2">
    <location>
        <begin position="127"/>
        <end position="135"/>
    </location>
</feature>
<feature type="disulfide bond" evidence="2">
    <location>
        <begin position="137"/>
        <end position="157"/>
    </location>
</feature>
<feature type="disulfide bond" evidence="2">
    <location>
        <begin position="206"/>
        <end position="220"/>
    </location>
</feature>
<feature type="disulfide bond" evidence="2">
    <location>
        <begin position="208"/>
        <end position="215"/>
    </location>
</feature>
<feature type="disulfide bond" evidence="2">
    <location>
        <begin position="278"/>
        <end position="309"/>
    </location>
</feature>
<feature type="disulfide bond" evidence="2">
    <location>
        <begin position="294"/>
        <end position="304"/>
    </location>
</feature>
<feature type="disulfide bond" evidence="2">
    <location>
        <begin position="308"/>
        <end position="348"/>
    </location>
</feature>
<feature type="disulfide bond" evidence="2">
    <location>
        <begin position="324"/>
        <end position="339"/>
    </location>
</feature>
<feature type="disulfide bond" evidence="2">
    <location>
        <begin position="326"/>
        <end position="336"/>
    </location>
</feature>
<feature type="disulfide bond" evidence="2">
    <location>
        <begin position="331"/>
        <end position="332"/>
    </location>
</feature>
<feature type="sequence conflict" description="In Ref. 1; no nucleotide entry and 2; no nucleotide entry." evidence="8" ref="1 2">
    <original>D</original>
    <variation>E</variation>
    <location>
        <position position="232"/>
    </location>
</feature>
<organism>
    <name type="scientific">Mus musculus</name>
    <name type="common">Mouse</name>
    <dbReference type="NCBI Taxonomy" id="10090"/>
    <lineage>
        <taxon>Eukaryota</taxon>
        <taxon>Metazoa</taxon>
        <taxon>Chordata</taxon>
        <taxon>Craniata</taxon>
        <taxon>Vertebrata</taxon>
        <taxon>Euteleostomi</taxon>
        <taxon>Mammalia</taxon>
        <taxon>Eutheria</taxon>
        <taxon>Euarchontoglires</taxon>
        <taxon>Glires</taxon>
        <taxon>Rodentia</taxon>
        <taxon>Myomorpha</taxon>
        <taxon>Muroidea</taxon>
        <taxon>Muridae</taxon>
        <taxon>Murinae</taxon>
        <taxon>Mus</taxon>
        <taxon>Mus</taxon>
    </lineage>
</organism>
<proteinExistence type="evidence at transcript level"/>
<sequence length="360" mass="40482">MNVPLGGIWLWLPLLLTWLTPEVSSSWWYMRATGGSSRVMCDNVPGLVSRQRQLCHRHPDVMRAIGLGVAEWTAECQHQFRQHRWNCNTLDRDHSLFGRVLLRSSRESAFVYAISSAGVVFAITRACSQGELKSCSCDPKKKGSAKDSKGTFDWGGCSDNIDYGIKFARAFVDAKERKGKDARALMNLHNNRAGRKAVKRFLKQECKCHGVSGSCTLRTCWLAMADFRKTGDYLWRKYNGAIQVVMNQDGTGFTVANKRFKKPTKNDLVYFENSPDYCIRDREAGSLGTAGRVCNLTSRGMDSCEVMCCGRGYDTSHVTRMTKCECKFHWCCAVRCQDCLEALDVHTCKAPKSADWATPT</sequence>
<evidence type="ECO:0000250" key="1">
    <source>
        <dbReference type="UniProtKB" id="P09544"/>
    </source>
</evidence>
<evidence type="ECO:0000250" key="2">
    <source>
        <dbReference type="UniProtKB" id="P28026"/>
    </source>
</evidence>
<evidence type="ECO:0000250" key="3">
    <source>
        <dbReference type="UniProtKB" id="P56704"/>
    </source>
</evidence>
<evidence type="ECO:0000255" key="4"/>
<evidence type="ECO:0000269" key="5">
    <source>
    </source>
</evidence>
<evidence type="ECO:0000269" key="6">
    <source>
    </source>
</evidence>
<evidence type="ECO:0000303" key="7">
    <source>
    </source>
</evidence>
<evidence type="ECO:0000305" key="8"/>
<evidence type="ECO:0000305" key="9">
    <source>
    </source>
</evidence>
<name>WNT2_MOUSE</name>
<keyword id="KW-0217">Developmental protein</keyword>
<keyword id="KW-1015">Disulfide bond</keyword>
<keyword id="KW-0272">Extracellular matrix</keyword>
<keyword id="KW-0325">Glycoprotein</keyword>
<keyword id="KW-0449">Lipoprotein</keyword>
<keyword id="KW-1185">Reference proteome</keyword>
<keyword id="KW-0964">Secreted</keyword>
<keyword id="KW-0732">Signal</keyword>
<keyword id="KW-0879">Wnt signaling pathway</keyword>
<comment type="function">
    <text evidence="5 8 9">Ligand for members of the frizzled family of seven transmembrane receptors. Functions in the canonical Wnt/beta-catenin signaling pathway (PubMed:19686689). Functions as a upstream regulator of FGF10 expression (PubMed:19686689). Plays an important role in embryonic lung development (PubMed:19686689). May contribute to embryonic brain development by regulating the proliferation of dopaminergic precursors and neurons (PubMed:20018874).</text>
</comment>
<comment type="subcellular location">
    <subcellularLocation>
        <location evidence="1">Secreted</location>
        <location evidence="1">Extracellular space</location>
        <location evidence="1">Extracellular matrix</location>
    </subcellularLocation>
    <subcellularLocation>
        <location evidence="1">Secreted</location>
    </subcellularLocation>
</comment>
<comment type="tissue specificity">
    <text>In embryos in the developing allantois, pericardium heart, and ventral-lateral mesoderm; in adults in lung, brain, heart and placenta.</text>
</comment>
<comment type="developmental stage">
    <text evidence="5 6">Detected in ventral mesencephalon from 10.5 to 15.5 dpc; expression levels decrease moderately, but steadily during this period (PubMed:20018874). Detected in the lateral plate mesoderm surrounding the ventral aspect of the anterior foregut from 9.0 to 10.5 dpc (PubMed:19686689). Detected in the developing mesenchyme with higher levels surrounding the distal regions of the branching airways from 12.5 to 18.5 dpc (PubMed:19686689).</text>
</comment>
<comment type="PTM">
    <text evidence="1">Palmitoleoylation is required for efficient binding to frizzled receptors. Depalmitoleoylation leads to Wnt signaling pathway inhibition.</text>
</comment>
<comment type="disruption phenotype">
    <text evidence="5">Nearly complete perinatal lethality within minutes after birth, due to lung hypoplasia (PubMed:19686689). About 4% survive for more than 30 days (PubMed:19686689). Combined disruption of Wnt2 and Wnt2b leads to lung agenesis and loss of trachea development (PubMed:19686689). In contrast, development of liver, stomach, intestine, pancreas and kidneys appears grossly normal (PubMed:19686689).</text>
</comment>
<comment type="similarity">
    <text evidence="8">Belongs to the Wnt family.</text>
</comment>
<protein>
    <recommendedName>
        <fullName>Protein Wnt-2</fullName>
    </recommendedName>
    <alternativeName>
        <fullName evidence="7">INT-1-related protein</fullName>
        <shortName>IRP</shortName>
    </alternativeName>
</protein>
<reference key="1">
    <citation type="journal article" date="1989" name="Development">
        <title>Nucleotide sequence, chromosomal localization and developmental expression of the mouse int-1-related gene.</title>
        <authorList>
            <person name="McMahon J.A."/>
            <person name="McMahon A.P."/>
        </authorList>
    </citation>
    <scope>NUCLEOTIDE SEQUENCE [MRNA]</scope>
</reference>
<reference key="2">
    <citation type="journal article" date="1990" name="Genes Dev.">
        <title>Expression of multiple novel Wnt-1/int-1-related genes during fetal and adult mouse development.</title>
        <authorList>
            <person name="Gavin B.J."/>
            <person name="McMahon J.A."/>
            <person name="McMahon A.P."/>
        </authorList>
    </citation>
    <scope>NUCLEOTIDE SEQUENCE [MRNA]</scope>
</reference>
<reference key="3">
    <citation type="journal article" date="2005" name="Science">
        <title>The transcriptional landscape of the mammalian genome.</title>
        <authorList>
            <person name="Carninci P."/>
            <person name="Kasukawa T."/>
            <person name="Katayama S."/>
            <person name="Gough J."/>
            <person name="Frith M.C."/>
            <person name="Maeda N."/>
            <person name="Oyama R."/>
            <person name="Ravasi T."/>
            <person name="Lenhard B."/>
            <person name="Wells C."/>
            <person name="Kodzius R."/>
            <person name="Shimokawa K."/>
            <person name="Bajic V.B."/>
            <person name="Brenner S.E."/>
            <person name="Batalov S."/>
            <person name="Forrest A.R."/>
            <person name="Zavolan M."/>
            <person name="Davis M.J."/>
            <person name="Wilming L.G."/>
            <person name="Aidinis V."/>
            <person name="Allen J.E."/>
            <person name="Ambesi-Impiombato A."/>
            <person name="Apweiler R."/>
            <person name="Aturaliya R.N."/>
            <person name="Bailey T.L."/>
            <person name="Bansal M."/>
            <person name="Baxter L."/>
            <person name="Beisel K.W."/>
            <person name="Bersano T."/>
            <person name="Bono H."/>
            <person name="Chalk A.M."/>
            <person name="Chiu K.P."/>
            <person name="Choudhary V."/>
            <person name="Christoffels A."/>
            <person name="Clutterbuck D.R."/>
            <person name="Crowe M.L."/>
            <person name="Dalla E."/>
            <person name="Dalrymple B.P."/>
            <person name="de Bono B."/>
            <person name="Della Gatta G."/>
            <person name="di Bernardo D."/>
            <person name="Down T."/>
            <person name="Engstrom P."/>
            <person name="Fagiolini M."/>
            <person name="Faulkner G."/>
            <person name="Fletcher C.F."/>
            <person name="Fukushima T."/>
            <person name="Furuno M."/>
            <person name="Futaki S."/>
            <person name="Gariboldi M."/>
            <person name="Georgii-Hemming P."/>
            <person name="Gingeras T.R."/>
            <person name="Gojobori T."/>
            <person name="Green R.E."/>
            <person name="Gustincich S."/>
            <person name="Harbers M."/>
            <person name="Hayashi Y."/>
            <person name="Hensch T.K."/>
            <person name="Hirokawa N."/>
            <person name="Hill D."/>
            <person name="Huminiecki L."/>
            <person name="Iacono M."/>
            <person name="Ikeo K."/>
            <person name="Iwama A."/>
            <person name="Ishikawa T."/>
            <person name="Jakt M."/>
            <person name="Kanapin A."/>
            <person name="Katoh M."/>
            <person name="Kawasawa Y."/>
            <person name="Kelso J."/>
            <person name="Kitamura H."/>
            <person name="Kitano H."/>
            <person name="Kollias G."/>
            <person name="Krishnan S.P."/>
            <person name="Kruger A."/>
            <person name="Kummerfeld S.K."/>
            <person name="Kurochkin I.V."/>
            <person name="Lareau L.F."/>
            <person name="Lazarevic D."/>
            <person name="Lipovich L."/>
            <person name="Liu J."/>
            <person name="Liuni S."/>
            <person name="McWilliam S."/>
            <person name="Madan Babu M."/>
            <person name="Madera M."/>
            <person name="Marchionni L."/>
            <person name="Matsuda H."/>
            <person name="Matsuzawa S."/>
            <person name="Miki H."/>
            <person name="Mignone F."/>
            <person name="Miyake S."/>
            <person name="Morris K."/>
            <person name="Mottagui-Tabar S."/>
            <person name="Mulder N."/>
            <person name="Nakano N."/>
            <person name="Nakauchi H."/>
            <person name="Ng P."/>
            <person name="Nilsson R."/>
            <person name="Nishiguchi S."/>
            <person name="Nishikawa S."/>
            <person name="Nori F."/>
            <person name="Ohara O."/>
            <person name="Okazaki Y."/>
            <person name="Orlando V."/>
            <person name="Pang K.C."/>
            <person name="Pavan W.J."/>
            <person name="Pavesi G."/>
            <person name="Pesole G."/>
            <person name="Petrovsky N."/>
            <person name="Piazza S."/>
            <person name="Reed J."/>
            <person name="Reid J.F."/>
            <person name="Ring B.Z."/>
            <person name="Ringwald M."/>
            <person name="Rost B."/>
            <person name="Ruan Y."/>
            <person name="Salzberg S.L."/>
            <person name="Sandelin A."/>
            <person name="Schneider C."/>
            <person name="Schoenbach C."/>
            <person name="Sekiguchi K."/>
            <person name="Semple C.A."/>
            <person name="Seno S."/>
            <person name="Sessa L."/>
            <person name="Sheng Y."/>
            <person name="Shibata Y."/>
            <person name="Shimada H."/>
            <person name="Shimada K."/>
            <person name="Silva D."/>
            <person name="Sinclair B."/>
            <person name="Sperling S."/>
            <person name="Stupka E."/>
            <person name="Sugiura K."/>
            <person name="Sultana R."/>
            <person name="Takenaka Y."/>
            <person name="Taki K."/>
            <person name="Tammoja K."/>
            <person name="Tan S.L."/>
            <person name="Tang S."/>
            <person name="Taylor M.S."/>
            <person name="Tegner J."/>
            <person name="Teichmann S.A."/>
            <person name="Ueda H.R."/>
            <person name="van Nimwegen E."/>
            <person name="Verardo R."/>
            <person name="Wei C.L."/>
            <person name="Yagi K."/>
            <person name="Yamanishi H."/>
            <person name="Zabarovsky E."/>
            <person name="Zhu S."/>
            <person name="Zimmer A."/>
            <person name="Hide W."/>
            <person name="Bult C."/>
            <person name="Grimmond S.M."/>
            <person name="Teasdale R.D."/>
            <person name="Liu E.T."/>
            <person name="Brusic V."/>
            <person name="Quackenbush J."/>
            <person name="Wahlestedt C."/>
            <person name="Mattick J.S."/>
            <person name="Hume D.A."/>
            <person name="Kai C."/>
            <person name="Sasaki D."/>
            <person name="Tomaru Y."/>
            <person name="Fukuda S."/>
            <person name="Kanamori-Katayama M."/>
            <person name="Suzuki M."/>
            <person name="Aoki J."/>
            <person name="Arakawa T."/>
            <person name="Iida J."/>
            <person name="Imamura K."/>
            <person name="Itoh M."/>
            <person name="Kato T."/>
            <person name="Kawaji H."/>
            <person name="Kawagashira N."/>
            <person name="Kawashima T."/>
            <person name="Kojima M."/>
            <person name="Kondo S."/>
            <person name="Konno H."/>
            <person name="Nakano K."/>
            <person name="Ninomiya N."/>
            <person name="Nishio T."/>
            <person name="Okada M."/>
            <person name="Plessy C."/>
            <person name="Shibata K."/>
            <person name="Shiraki T."/>
            <person name="Suzuki S."/>
            <person name="Tagami M."/>
            <person name="Waki K."/>
            <person name="Watahiki A."/>
            <person name="Okamura-Oho Y."/>
            <person name="Suzuki H."/>
            <person name="Kawai J."/>
            <person name="Hayashizaki Y."/>
        </authorList>
    </citation>
    <scope>NUCLEOTIDE SEQUENCE [LARGE SCALE MRNA]</scope>
    <source>
        <strain>C57BL/6J</strain>
        <tissue>Embryo</tissue>
    </source>
</reference>
<reference key="4">
    <citation type="submission" date="2005-09" db="EMBL/GenBank/DDBJ databases">
        <authorList>
            <person name="Mural R.J."/>
            <person name="Adams M.D."/>
            <person name="Myers E.W."/>
            <person name="Smith H.O."/>
            <person name="Venter J.C."/>
        </authorList>
    </citation>
    <scope>NUCLEOTIDE SEQUENCE [LARGE SCALE GENOMIC DNA]</scope>
</reference>
<reference key="5">
    <citation type="journal article" date="2004" name="Genome Res.">
        <title>The status, quality, and expansion of the NIH full-length cDNA project: the Mammalian Gene Collection (MGC).</title>
        <authorList>
            <consortium name="The MGC Project Team"/>
        </authorList>
    </citation>
    <scope>NUCLEOTIDE SEQUENCE [LARGE SCALE MRNA]</scope>
    <source>
        <strain>FVB/N</strain>
        <tissue>Liver</tissue>
    </source>
</reference>
<reference key="6">
    <citation type="journal article" date="2009" name="Dev. Cell">
        <title>Wnt2/2b and beta-catenin signaling are necessary and sufficient to specify lung progenitors in the foregut.</title>
        <authorList>
            <person name="Goss A.M."/>
            <person name="Tian Y."/>
            <person name="Tsukiyama T."/>
            <person name="Cohen E.D."/>
            <person name="Zhou D."/>
            <person name="Lu M.M."/>
            <person name="Yamaguchi T.P."/>
            <person name="Morrisey E.E."/>
        </authorList>
    </citation>
    <scope>FUNCTION</scope>
    <scope>DISRUPTION PHENOTYPE</scope>
    <scope>DEVELOPMENTAL STAGE</scope>
</reference>
<reference key="7">
    <citation type="journal article" date="2010" name="J. Biol. Chem.">
        <title>Wnt2 regulates progenitor proliferation in the developing ventral midbrain.</title>
        <authorList>
            <person name="Sousa K.M."/>
            <person name="Villaescusa J.C."/>
            <person name="Cajanek L."/>
            <person name="Ondr J.K."/>
            <person name="Castelo-Branco G."/>
            <person name="Hofstra W."/>
            <person name="Bryja V."/>
            <person name="Palmberg C."/>
            <person name="Bergman T."/>
            <person name="Wainwright B."/>
            <person name="Lang R.A."/>
            <person name="Arenas E."/>
        </authorList>
    </citation>
    <scope>DEVELOPMENTAL STAGE</scope>
    <scope>FUNCTION</scope>
</reference>
<reference key="8">
    <citation type="journal article" date="2011" name="Dev. Biol.">
        <title>Wnt2 signaling is necessary and sufficient to activate the airway smooth muscle program in the lung by regulating myocardin/Mrtf-B and Fgf10 expression.</title>
        <authorList>
            <person name="Goss A.M."/>
            <person name="Tian Y."/>
            <person name="Cheng L."/>
            <person name="Yang J."/>
            <person name="Zhou D."/>
            <person name="Cohen E.D."/>
            <person name="Morrisey E.E."/>
        </authorList>
    </citation>
    <scope>FUNCTION</scope>
    <scope>DISRUPTION PHENOTYPE</scope>
</reference>
<gene>
    <name type="primary">Wnt2</name>
    <name type="synonym">Irp</name>
    <name type="synonym">Wnt-2</name>
</gene>